<protein>
    <recommendedName>
        <fullName>FMRFamide-like neuropeptide PF4</fullName>
    </recommendedName>
    <alternativeName>
        <fullName>KPNFIRF-amide</fullName>
    </alternativeName>
</protein>
<comment type="function">
    <text>Myoactive; induces a rapid concentration-dependent muscle tension increase.</text>
</comment>
<comment type="subcellular location">
    <subcellularLocation>
        <location>Secreted</location>
    </subcellularLocation>
</comment>
<comment type="similarity">
    <text evidence="2">Belongs to the FARP (FMRFamide related peptide) family.</text>
</comment>
<name>FAR4_PANRE</name>
<reference key="1">
    <citation type="journal article" date="1995" name="Peptides">
        <title>Isolation and preliminary biological characterization of KPNFIRFamide, a novel FMRFamide-related peptide from the free-living nematode, Panagrellus redivivus.</title>
        <authorList>
            <person name="Maule A.G."/>
            <person name="Shaw C."/>
            <person name="Bowman J.W."/>
            <person name="Halton D.W."/>
            <person name="Thompson D.P."/>
            <person name="Thim L."/>
            <person name="Kubiak T.M."/>
            <person name="Martin R.A."/>
            <person name="Geary T.G."/>
        </authorList>
    </citation>
    <scope>PROTEIN SEQUENCE</scope>
    <scope>AMIDATION AT PHE-7</scope>
    <scope>SYNTHESIS</scope>
</reference>
<proteinExistence type="evidence at protein level"/>
<feature type="peptide" id="PRO_0000043709" description="FMRFamide-like neuropeptide PF4">
    <location>
        <begin position="1"/>
        <end position="7"/>
    </location>
</feature>
<feature type="modified residue" description="Phenylalanine amide" evidence="1">
    <location>
        <position position="7"/>
    </location>
</feature>
<evidence type="ECO:0000269" key="1">
    <source>
    </source>
</evidence>
<evidence type="ECO:0000305" key="2"/>
<sequence length="7" mass="921">KPNFIRF</sequence>
<dbReference type="Proteomes" id="UP000492821">
    <property type="component" value="Unplaced"/>
</dbReference>
<dbReference type="GO" id="GO:0005576">
    <property type="term" value="C:extracellular region"/>
    <property type="evidence" value="ECO:0007669"/>
    <property type="project" value="UniProtKB-SubCell"/>
</dbReference>
<dbReference type="GO" id="GO:0007218">
    <property type="term" value="P:neuropeptide signaling pathway"/>
    <property type="evidence" value="ECO:0007669"/>
    <property type="project" value="UniProtKB-KW"/>
</dbReference>
<accession>P41875</accession>
<organism>
    <name type="scientific">Panagrellus redivivus</name>
    <name type="common">Microworm</name>
    <dbReference type="NCBI Taxonomy" id="6233"/>
    <lineage>
        <taxon>Eukaryota</taxon>
        <taxon>Metazoa</taxon>
        <taxon>Ecdysozoa</taxon>
        <taxon>Nematoda</taxon>
        <taxon>Chromadorea</taxon>
        <taxon>Rhabditida</taxon>
        <taxon>Tylenchina</taxon>
        <taxon>Panagrolaimomorpha</taxon>
        <taxon>Panagrolaimoidea</taxon>
        <taxon>Panagrolaimidae</taxon>
        <taxon>Panagrellus</taxon>
    </lineage>
</organism>
<keyword id="KW-0027">Amidation</keyword>
<keyword id="KW-0903">Direct protein sequencing</keyword>
<keyword id="KW-0527">Neuropeptide</keyword>
<keyword id="KW-1185">Reference proteome</keyword>
<keyword id="KW-0964">Secreted</keyword>